<keyword id="KW-0119">Carbohydrate metabolism</keyword>
<keyword id="KW-0313">Glucose metabolism</keyword>
<keyword id="KW-0378">Hydrolase</keyword>
<accession>B8D985</accession>
<proteinExistence type="inferred from homology"/>
<gene>
    <name evidence="1" type="primary">pgl</name>
    <name type="ordered locus">BUAP5A_288</name>
</gene>
<organism>
    <name type="scientific">Buchnera aphidicola subsp. Acyrthosiphon pisum (strain 5A)</name>
    <dbReference type="NCBI Taxonomy" id="563178"/>
    <lineage>
        <taxon>Bacteria</taxon>
        <taxon>Pseudomonadati</taxon>
        <taxon>Pseudomonadota</taxon>
        <taxon>Gammaproteobacteria</taxon>
        <taxon>Enterobacterales</taxon>
        <taxon>Erwiniaceae</taxon>
        <taxon>Buchnera</taxon>
    </lineage>
</organism>
<feature type="chain" id="PRO_1000185833" description="6-phosphogluconolactonase">
    <location>
        <begin position="1"/>
        <end position="334"/>
    </location>
</feature>
<reference key="1">
    <citation type="journal article" date="2009" name="Science">
        <title>The dynamics and time scale of ongoing genomic erosion in symbiotic bacteria.</title>
        <authorList>
            <person name="Moran N.A."/>
            <person name="McLaughlin H.J."/>
            <person name="Sorek R."/>
        </authorList>
    </citation>
    <scope>NUCLEOTIDE SEQUENCE [LARGE SCALE GENOMIC DNA]</scope>
    <source>
        <strain>5A</strain>
    </source>
</reference>
<name>6PGL_BUCA5</name>
<comment type="function">
    <text evidence="1">Catalyzes the hydrolysis of 6-phosphogluconolactone to 6-phosphogluconate.</text>
</comment>
<comment type="catalytic activity">
    <reaction evidence="1">
        <text>6-phospho-D-glucono-1,5-lactone + H2O = 6-phospho-D-gluconate + H(+)</text>
        <dbReference type="Rhea" id="RHEA:12556"/>
        <dbReference type="ChEBI" id="CHEBI:15377"/>
        <dbReference type="ChEBI" id="CHEBI:15378"/>
        <dbReference type="ChEBI" id="CHEBI:57955"/>
        <dbReference type="ChEBI" id="CHEBI:58759"/>
        <dbReference type="EC" id="3.1.1.31"/>
    </reaction>
</comment>
<comment type="pathway">
    <text evidence="1">Carbohydrate degradation; pentose phosphate pathway; D-ribulose 5-phosphate from D-glucose 6-phosphate (oxidative stage): step 2/3.</text>
</comment>
<comment type="similarity">
    <text evidence="1">Belongs to the cycloisomerase 2 family.</text>
</comment>
<evidence type="ECO:0000255" key="1">
    <source>
        <dbReference type="HAMAP-Rule" id="MF_01605"/>
    </source>
</evidence>
<sequence>MKQVVYIANSESKNIEVWNLCKSGKMNLIQKIETDGKIQPINIIQKRNLLYAGIFPDNKIITYSINHNGFLEKKNESNIPGKANYISFDKKKEFLFCSSYHSNFISVSPLNKFGIPQNPIQIIYNIEGCHAAKMNYKYNILFVISLKEDCIYLYYLTDFGILKSTEQNILHTQKKSGPRHIIFHPNQDFVYTINELNGTIDVWKIYKKNNVIKVKNIQNIHVLKNRFLKDYWCSDIHITSCGRFLYACDRFFNIISLFHINQNDNKLVFFKSYDTEEQPRSFNINSHNTHLIVAGEKSNTFIIYSISNSTGELKKINVYSTGQRPVWILIHALC</sequence>
<dbReference type="EC" id="3.1.1.31" evidence="1"/>
<dbReference type="EMBL" id="CP001161">
    <property type="protein sequence ID" value="ACL30656.1"/>
    <property type="molecule type" value="Genomic_DNA"/>
</dbReference>
<dbReference type="RefSeq" id="WP_009874247.1">
    <property type="nucleotide sequence ID" value="NC_011833.1"/>
</dbReference>
<dbReference type="SMR" id="B8D985"/>
<dbReference type="KEGG" id="bap:BUAP5A_288"/>
<dbReference type="HOGENOM" id="CLU_038716_2_0_6"/>
<dbReference type="OrthoDB" id="9790815at2"/>
<dbReference type="UniPathway" id="UPA00115">
    <property type="reaction ID" value="UER00409"/>
</dbReference>
<dbReference type="Proteomes" id="UP000006904">
    <property type="component" value="Chromosome"/>
</dbReference>
<dbReference type="GO" id="GO:0005829">
    <property type="term" value="C:cytosol"/>
    <property type="evidence" value="ECO:0007669"/>
    <property type="project" value="TreeGrafter"/>
</dbReference>
<dbReference type="GO" id="GO:0017057">
    <property type="term" value="F:6-phosphogluconolactonase activity"/>
    <property type="evidence" value="ECO:0007669"/>
    <property type="project" value="UniProtKB-UniRule"/>
</dbReference>
<dbReference type="GO" id="GO:0006006">
    <property type="term" value="P:glucose metabolic process"/>
    <property type="evidence" value="ECO:0007669"/>
    <property type="project" value="UniProtKB-KW"/>
</dbReference>
<dbReference type="GO" id="GO:0009051">
    <property type="term" value="P:pentose-phosphate shunt, oxidative branch"/>
    <property type="evidence" value="ECO:0007669"/>
    <property type="project" value="UniProtKB-UniRule"/>
</dbReference>
<dbReference type="Gene3D" id="2.130.10.10">
    <property type="entry name" value="YVTN repeat-like/Quinoprotein amine dehydrogenase"/>
    <property type="match status" value="1"/>
</dbReference>
<dbReference type="HAMAP" id="MF_01605">
    <property type="entry name" value="6P_gluconolactonase"/>
    <property type="match status" value="1"/>
</dbReference>
<dbReference type="InterPro" id="IPR022528">
    <property type="entry name" value="6-phosphogluconolactonase_YbhE"/>
</dbReference>
<dbReference type="InterPro" id="IPR050282">
    <property type="entry name" value="Cycloisomerase_2"/>
</dbReference>
<dbReference type="InterPro" id="IPR019405">
    <property type="entry name" value="Lactonase_7-beta_prop"/>
</dbReference>
<dbReference type="InterPro" id="IPR015943">
    <property type="entry name" value="WD40/YVTN_repeat-like_dom_sf"/>
</dbReference>
<dbReference type="NCBIfam" id="NF008258">
    <property type="entry name" value="PRK11028.1"/>
    <property type="match status" value="1"/>
</dbReference>
<dbReference type="PANTHER" id="PTHR30344:SF1">
    <property type="entry name" value="6-PHOSPHOGLUCONOLACTONASE"/>
    <property type="match status" value="1"/>
</dbReference>
<dbReference type="PANTHER" id="PTHR30344">
    <property type="entry name" value="6-PHOSPHOGLUCONOLACTONASE-RELATED"/>
    <property type="match status" value="1"/>
</dbReference>
<dbReference type="Pfam" id="PF10282">
    <property type="entry name" value="Lactonase"/>
    <property type="match status" value="1"/>
</dbReference>
<dbReference type="SUPFAM" id="SSF101908">
    <property type="entry name" value="Putative isomerase YbhE"/>
    <property type="match status" value="1"/>
</dbReference>
<protein>
    <recommendedName>
        <fullName evidence="1">6-phosphogluconolactonase</fullName>
        <shortName evidence="1">6-P-gluconolactonase</shortName>
        <ecNumber evidence="1">3.1.1.31</ecNumber>
    </recommendedName>
</protein>